<name>Y5673_ARATH</name>
<gene>
    <name type="ordered locus">At5g16730</name>
    <name type="ORF">F5E19_70</name>
</gene>
<evidence type="ECO:0000250" key="1">
    <source>
        <dbReference type="UniProtKB" id="F4I8B9"/>
    </source>
</evidence>
<evidence type="ECO:0000255" key="2"/>
<evidence type="ECO:0000256" key="3">
    <source>
        <dbReference type="SAM" id="MobiDB-lite"/>
    </source>
</evidence>
<evidence type="ECO:0000305" key="4"/>
<sequence length="853" mass="96208">MASKTKTSLSETTTTTTPTGKSSPATPRIAKRTVNKSETSNNNSPSTTTPHSRLSLDRSSPNSKSSVERRSPKLPTPPEKSQARVAAVKGTESPQTTTRLSQIKEDLKKANERISSLEKDKAKALDELKQAKKEAEQVTLKLDDALKAQKHVEENSEIEKFQAVEAGIEAVQNNEEELKKELETVKNQHASDSAALVAVRQELEKINEELAAAFDAKSKALSQAEDASKTAEIHAEKVDILSSELTRLKALLDSTREKTAISDNEMVAKLEDEIVVLKRDLESARGFEAEVKEKEMIVEKLNVDLEAAKMAESNAHSLSNEWQSKAKELEEQLEEANKLERSASVSLESVMKQLEGSNDKLHDTETEITDLKERIVTLETTVAKQKEDLEVSEQRLGSVEEEVSKNEKEVEKLKSELETVKEEKNRALKKEQDATSRVQRLSEEKSKLLSDLESSKEEEEKSKKAMESLASALHEVSSEGRELKEKLLSQGDHEYETQIDDLKLVIKATNEKYENMLDEARHEIDVLVSAVEQTKKHFESSKKDWEMKEANLVNYVKKMEEDVASMGKEMNRLDNLLKRTEEEADAAWKKEAQTKDSLKEVEEEIVYLQETLGEAKAESMKLKENLLDKETEFQNVIHENEDLKAKEDVSLKKIEELSKLLEEAILAKKQPEEENGELSESEKDYDLLPKVVEFSSENGHRSVEEKSAKVETLDHEPPQEQISNGNSNGNGMEEKEVNGKPEVETEKKEKKDESQDDDKDDSVEVIFKMWESCQIEKKEAFPDKKSELESQEEEEDSSKIDESDKTSTENIDETGNALTAEDQLTMEKKIKKKKTLLGKVGNLLKKKAPVNQK</sequence>
<accession>Q9LFE4</accession>
<accession>Q56Y73</accession>
<dbReference type="EMBL" id="AL391147">
    <property type="protein sequence ID" value="CAC01837.1"/>
    <property type="molecule type" value="Genomic_DNA"/>
</dbReference>
<dbReference type="EMBL" id="CP002688">
    <property type="protein sequence ID" value="AED92331.1"/>
    <property type="molecule type" value="Genomic_DNA"/>
</dbReference>
<dbReference type="EMBL" id="AK221450">
    <property type="protein sequence ID" value="BAD94516.1"/>
    <property type="molecule type" value="mRNA"/>
</dbReference>
<dbReference type="PIR" id="T51505">
    <property type="entry name" value="T51505"/>
</dbReference>
<dbReference type="RefSeq" id="NP_197175.1">
    <property type="nucleotide sequence ID" value="NM_121679.4"/>
</dbReference>
<dbReference type="SMR" id="Q9LFE4"/>
<dbReference type="FunCoup" id="Q9LFE4">
    <property type="interactions" value="1519"/>
</dbReference>
<dbReference type="STRING" id="3702.Q9LFE4"/>
<dbReference type="iPTMnet" id="Q9LFE4"/>
<dbReference type="PaxDb" id="3702-AT5G16730.1"/>
<dbReference type="ProteomicsDB" id="242909"/>
<dbReference type="EnsemblPlants" id="AT5G16730.1">
    <property type="protein sequence ID" value="AT5G16730.1"/>
    <property type="gene ID" value="AT5G16730"/>
</dbReference>
<dbReference type="GeneID" id="831536"/>
<dbReference type="Gramene" id="AT5G16730.1">
    <property type="protein sequence ID" value="AT5G16730.1"/>
    <property type="gene ID" value="AT5G16730"/>
</dbReference>
<dbReference type="KEGG" id="ath:AT5G16730"/>
<dbReference type="Araport" id="AT5G16730"/>
<dbReference type="TAIR" id="AT5G16730"/>
<dbReference type="eggNOG" id="ENOG502QSCE">
    <property type="taxonomic scope" value="Eukaryota"/>
</dbReference>
<dbReference type="HOGENOM" id="CLU_013878_1_0_1"/>
<dbReference type="InParanoid" id="Q9LFE4"/>
<dbReference type="OMA" id="GEMADNH"/>
<dbReference type="PhylomeDB" id="Q9LFE4"/>
<dbReference type="CD-CODE" id="4299E36E">
    <property type="entry name" value="Nucleolus"/>
</dbReference>
<dbReference type="PRO" id="PR:Q9LFE4"/>
<dbReference type="Proteomes" id="UP000006548">
    <property type="component" value="Chromosome 5"/>
</dbReference>
<dbReference type="ExpressionAtlas" id="Q9LFE4">
    <property type="expression patterns" value="baseline and differential"/>
</dbReference>
<dbReference type="GO" id="GO:0009507">
    <property type="term" value="C:chloroplast"/>
    <property type="evidence" value="ECO:0007669"/>
    <property type="project" value="UniProtKB-SubCell"/>
</dbReference>
<dbReference type="GO" id="GO:0005875">
    <property type="term" value="C:microtubule associated complex"/>
    <property type="evidence" value="ECO:0000314"/>
    <property type="project" value="TAIR"/>
</dbReference>
<dbReference type="GO" id="GO:0009536">
    <property type="term" value="C:plastid"/>
    <property type="evidence" value="ECO:0007005"/>
    <property type="project" value="TAIR"/>
</dbReference>
<dbReference type="Gene3D" id="1.10.287.1490">
    <property type="match status" value="1"/>
</dbReference>
<dbReference type="InterPro" id="IPR008545">
    <property type="entry name" value="Web"/>
</dbReference>
<dbReference type="PANTHER" id="PTHR23160:SF20">
    <property type="entry name" value="OS02G0439200 PROTEIN"/>
    <property type="match status" value="1"/>
</dbReference>
<dbReference type="PANTHER" id="PTHR23160">
    <property type="entry name" value="SYNAPTONEMAL COMPLEX PROTEIN-RELATED"/>
    <property type="match status" value="1"/>
</dbReference>
<dbReference type="Pfam" id="PF05701">
    <property type="entry name" value="WEMBL"/>
    <property type="match status" value="1"/>
</dbReference>
<comment type="subcellular location">
    <subcellularLocation>
        <location evidence="4">Plastid</location>
        <location evidence="4">Chloroplast</location>
    </subcellularLocation>
</comment>
<comment type="similarity">
    <text evidence="4">Belongs to the WEB family.</text>
</comment>
<feature type="transit peptide" description="Chloroplast" evidence="2">
    <location>
        <begin position="1"/>
        <end position="84"/>
    </location>
</feature>
<feature type="chain" id="PRO_0000414080" description="WEB family protein At5g16730, chloroplastic">
    <location>
        <begin position="85"/>
        <end position="853"/>
    </location>
</feature>
<feature type="region of interest" description="Disordered" evidence="3">
    <location>
        <begin position="1"/>
        <end position="106"/>
    </location>
</feature>
<feature type="region of interest" description="Disordered" evidence="3">
    <location>
        <begin position="386"/>
        <end position="465"/>
    </location>
</feature>
<feature type="region of interest" description="Disordered" evidence="3">
    <location>
        <begin position="666"/>
        <end position="765"/>
    </location>
</feature>
<feature type="region of interest" description="Disordered" evidence="3">
    <location>
        <begin position="778"/>
        <end position="820"/>
    </location>
</feature>
<feature type="coiled-coil region" evidence="2">
    <location>
        <begin position="94"/>
        <end position="670"/>
    </location>
</feature>
<feature type="compositionally biased region" description="Low complexity" evidence="3">
    <location>
        <begin position="1"/>
        <end position="27"/>
    </location>
</feature>
<feature type="compositionally biased region" description="Low complexity" evidence="3">
    <location>
        <begin position="36"/>
        <end position="49"/>
    </location>
</feature>
<feature type="compositionally biased region" description="Polar residues" evidence="3">
    <location>
        <begin position="92"/>
        <end position="101"/>
    </location>
</feature>
<feature type="compositionally biased region" description="Basic and acidic residues" evidence="3">
    <location>
        <begin position="402"/>
        <end position="465"/>
    </location>
</feature>
<feature type="compositionally biased region" description="Basic and acidic residues" evidence="3">
    <location>
        <begin position="698"/>
        <end position="718"/>
    </location>
</feature>
<feature type="compositionally biased region" description="Basic and acidic residues" evidence="3">
    <location>
        <begin position="732"/>
        <end position="753"/>
    </location>
</feature>
<feature type="compositionally biased region" description="Acidic residues" evidence="3">
    <location>
        <begin position="754"/>
        <end position="763"/>
    </location>
</feature>
<feature type="compositionally biased region" description="Basic and acidic residues" evidence="3">
    <location>
        <begin position="778"/>
        <end position="788"/>
    </location>
</feature>
<feature type="compositionally biased region" description="Basic and acidic residues" evidence="3">
    <location>
        <begin position="797"/>
        <end position="807"/>
    </location>
</feature>
<feature type="modified residue" description="Phosphoserine" evidence="1">
    <location>
        <position position="790"/>
    </location>
</feature>
<organism>
    <name type="scientific">Arabidopsis thaliana</name>
    <name type="common">Mouse-ear cress</name>
    <dbReference type="NCBI Taxonomy" id="3702"/>
    <lineage>
        <taxon>Eukaryota</taxon>
        <taxon>Viridiplantae</taxon>
        <taxon>Streptophyta</taxon>
        <taxon>Embryophyta</taxon>
        <taxon>Tracheophyta</taxon>
        <taxon>Spermatophyta</taxon>
        <taxon>Magnoliopsida</taxon>
        <taxon>eudicotyledons</taxon>
        <taxon>Gunneridae</taxon>
        <taxon>Pentapetalae</taxon>
        <taxon>rosids</taxon>
        <taxon>malvids</taxon>
        <taxon>Brassicales</taxon>
        <taxon>Brassicaceae</taxon>
        <taxon>Camelineae</taxon>
        <taxon>Arabidopsis</taxon>
    </lineage>
</organism>
<keyword id="KW-0150">Chloroplast</keyword>
<keyword id="KW-0175">Coiled coil</keyword>
<keyword id="KW-0597">Phosphoprotein</keyword>
<keyword id="KW-0934">Plastid</keyword>
<keyword id="KW-1185">Reference proteome</keyword>
<keyword id="KW-0809">Transit peptide</keyword>
<protein>
    <recommendedName>
        <fullName>WEB family protein At5g16730, chloroplastic</fullName>
    </recommendedName>
</protein>
<proteinExistence type="evidence at protein level"/>
<reference key="1">
    <citation type="journal article" date="2000" name="Nature">
        <title>Sequence and analysis of chromosome 5 of the plant Arabidopsis thaliana.</title>
        <authorList>
            <person name="Tabata S."/>
            <person name="Kaneko T."/>
            <person name="Nakamura Y."/>
            <person name="Kotani H."/>
            <person name="Kato T."/>
            <person name="Asamizu E."/>
            <person name="Miyajima N."/>
            <person name="Sasamoto S."/>
            <person name="Kimura T."/>
            <person name="Hosouchi T."/>
            <person name="Kawashima K."/>
            <person name="Kohara M."/>
            <person name="Matsumoto M."/>
            <person name="Matsuno A."/>
            <person name="Muraki A."/>
            <person name="Nakayama S."/>
            <person name="Nakazaki N."/>
            <person name="Naruo K."/>
            <person name="Okumura S."/>
            <person name="Shinpo S."/>
            <person name="Takeuchi C."/>
            <person name="Wada T."/>
            <person name="Watanabe A."/>
            <person name="Yamada M."/>
            <person name="Yasuda M."/>
            <person name="Sato S."/>
            <person name="de la Bastide M."/>
            <person name="Huang E."/>
            <person name="Spiegel L."/>
            <person name="Gnoj L."/>
            <person name="O'Shaughnessy A."/>
            <person name="Preston R."/>
            <person name="Habermann K."/>
            <person name="Murray J."/>
            <person name="Johnson D."/>
            <person name="Rohlfing T."/>
            <person name="Nelson J."/>
            <person name="Stoneking T."/>
            <person name="Pepin K."/>
            <person name="Spieth J."/>
            <person name="Sekhon M."/>
            <person name="Armstrong J."/>
            <person name="Becker M."/>
            <person name="Belter E."/>
            <person name="Cordum H."/>
            <person name="Cordes M."/>
            <person name="Courtney L."/>
            <person name="Courtney W."/>
            <person name="Dante M."/>
            <person name="Du H."/>
            <person name="Edwards J."/>
            <person name="Fryman J."/>
            <person name="Haakensen B."/>
            <person name="Lamar E."/>
            <person name="Latreille P."/>
            <person name="Leonard S."/>
            <person name="Meyer R."/>
            <person name="Mulvaney E."/>
            <person name="Ozersky P."/>
            <person name="Riley A."/>
            <person name="Strowmatt C."/>
            <person name="Wagner-McPherson C."/>
            <person name="Wollam A."/>
            <person name="Yoakum M."/>
            <person name="Bell M."/>
            <person name="Dedhia N."/>
            <person name="Parnell L."/>
            <person name="Shah R."/>
            <person name="Rodriguez M."/>
            <person name="Hoon See L."/>
            <person name="Vil D."/>
            <person name="Baker J."/>
            <person name="Kirchoff K."/>
            <person name="Toth K."/>
            <person name="King L."/>
            <person name="Bahret A."/>
            <person name="Miller B."/>
            <person name="Marra M.A."/>
            <person name="Martienssen R."/>
            <person name="McCombie W.R."/>
            <person name="Wilson R.K."/>
            <person name="Murphy G."/>
            <person name="Bancroft I."/>
            <person name="Volckaert G."/>
            <person name="Wambutt R."/>
            <person name="Duesterhoeft A."/>
            <person name="Stiekema W."/>
            <person name="Pohl T."/>
            <person name="Entian K.-D."/>
            <person name="Terryn N."/>
            <person name="Hartley N."/>
            <person name="Bent E."/>
            <person name="Johnson S."/>
            <person name="Langham S.-A."/>
            <person name="McCullagh B."/>
            <person name="Robben J."/>
            <person name="Grymonprez B."/>
            <person name="Zimmermann W."/>
            <person name="Ramsperger U."/>
            <person name="Wedler H."/>
            <person name="Balke K."/>
            <person name="Wedler E."/>
            <person name="Peters S."/>
            <person name="van Staveren M."/>
            <person name="Dirkse W."/>
            <person name="Mooijman P."/>
            <person name="Klein Lankhorst R."/>
            <person name="Weitzenegger T."/>
            <person name="Bothe G."/>
            <person name="Rose M."/>
            <person name="Hauf J."/>
            <person name="Berneiser S."/>
            <person name="Hempel S."/>
            <person name="Feldpausch M."/>
            <person name="Lamberth S."/>
            <person name="Villarroel R."/>
            <person name="Gielen J."/>
            <person name="Ardiles W."/>
            <person name="Bents O."/>
            <person name="Lemcke K."/>
            <person name="Kolesov G."/>
            <person name="Mayer K.F.X."/>
            <person name="Rudd S."/>
            <person name="Schoof H."/>
            <person name="Schueller C."/>
            <person name="Zaccaria P."/>
            <person name="Mewes H.-W."/>
            <person name="Bevan M."/>
            <person name="Fransz P.F."/>
        </authorList>
    </citation>
    <scope>NUCLEOTIDE SEQUENCE [LARGE SCALE GENOMIC DNA]</scope>
    <source>
        <strain>cv. Columbia</strain>
    </source>
</reference>
<reference key="2">
    <citation type="journal article" date="2017" name="Plant J.">
        <title>Araport11: a complete reannotation of the Arabidopsis thaliana reference genome.</title>
        <authorList>
            <person name="Cheng C.Y."/>
            <person name="Krishnakumar V."/>
            <person name="Chan A.P."/>
            <person name="Thibaud-Nissen F."/>
            <person name="Schobel S."/>
            <person name="Town C.D."/>
        </authorList>
    </citation>
    <scope>GENOME REANNOTATION</scope>
    <source>
        <strain>cv. Columbia</strain>
    </source>
</reference>
<reference key="3">
    <citation type="submission" date="2005-03" db="EMBL/GenBank/DDBJ databases">
        <title>Large-scale analysis of RIKEN Arabidopsis full-length (RAFL) cDNAs.</title>
        <authorList>
            <person name="Totoki Y."/>
            <person name="Seki M."/>
            <person name="Ishida J."/>
            <person name="Nakajima M."/>
            <person name="Enju A."/>
            <person name="Kamiya A."/>
            <person name="Narusaka M."/>
            <person name="Shin-i T."/>
            <person name="Nakagawa M."/>
            <person name="Sakamoto N."/>
            <person name="Oishi K."/>
            <person name="Kohara Y."/>
            <person name="Kobayashi M."/>
            <person name="Toyoda A."/>
            <person name="Sakaki Y."/>
            <person name="Sakurai T."/>
            <person name="Iida K."/>
            <person name="Akiyama K."/>
            <person name="Satou M."/>
            <person name="Toyoda T."/>
            <person name="Konagaya A."/>
            <person name="Carninci P."/>
            <person name="Kawai J."/>
            <person name="Hayashizaki Y."/>
            <person name="Shinozaki K."/>
        </authorList>
    </citation>
    <scope>NUCLEOTIDE SEQUENCE [LARGE SCALE MRNA] OF 1-454</scope>
    <source>
        <strain>cv. Columbia</strain>
    </source>
</reference>
<reference key="4">
    <citation type="journal article" date="2009" name="J. Proteomics">
        <title>Phosphoproteomic analysis of nuclei-enriched fractions from Arabidopsis thaliana.</title>
        <authorList>
            <person name="Jones A.M.E."/>
            <person name="MacLean D."/>
            <person name="Studholme D.J."/>
            <person name="Serna-Sanz A."/>
            <person name="Andreasson E."/>
            <person name="Rathjen J.P."/>
            <person name="Peck S.C."/>
        </authorList>
    </citation>
    <scope>IDENTIFICATION BY MASS SPECTROMETRY [LARGE SCALE ANALYSIS]</scope>
    <source>
        <strain>cv. Columbia</strain>
    </source>
</reference>